<accession>P41225</accession>
<accession>P35714</accession>
<accession>Q5JWI3</accession>
<accession>Q9NP49</accession>
<protein>
    <recommendedName>
        <fullName>Transcription factor SOX-3</fullName>
    </recommendedName>
</protein>
<sequence length="446" mass="45210">MRPVRENSSGARSPRVPADLARSILISLPFPPDSLAHRPPSSAPTESQGLFTVAAPAPGAPSPPATLAHLLPAPAMYSLLETELKNPVGTPTQAAGTGGPAAPGGAGKSSANAAGGANSGGGSSGGASGGGGGTDQDRVKRPMNAFMVWSRGQRRKMALENPKMHNSEISKRLGADWKLLTDAEKRPFIDEAKRLRAVHMKEYPDYKYRPRRKTKTLLKKDKYSLPSGLLPPGAAAAAAAAAAAAAAASSPVGVGQRLDTYTHVNGWANGAYSLVQEQLGYAQPPSMSSPPPPPALPPMHRYDMAGLQYSPMMPPGAQSYMNVAAAAAAASGYGGMAPSATAAAAAAYGQQPATAAAAAAAAAAMSLGPMGSVVKSEPSSPPPAIASHSQRACLGDLRDMISMYLPPGGDAADAASPLPGGRLHGVHQHYQGAGTAVNGTVPLTHI</sequence>
<proteinExistence type="evidence at protein level"/>
<organism>
    <name type="scientific">Homo sapiens</name>
    <name type="common">Human</name>
    <dbReference type="NCBI Taxonomy" id="9606"/>
    <lineage>
        <taxon>Eukaryota</taxon>
        <taxon>Metazoa</taxon>
        <taxon>Chordata</taxon>
        <taxon>Craniata</taxon>
        <taxon>Vertebrata</taxon>
        <taxon>Euteleostomi</taxon>
        <taxon>Mammalia</taxon>
        <taxon>Eutheria</taxon>
        <taxon>Euarchontoglires</taxon>
        <taxon>Primates</taxon>
        <taxon>Haplorrhini</taxon>
        <taxon>Catarrhini</taxon>
        <taxon>Hominidae</taxon>
        <taxon>Homo</taxon>
    </lineage>
</organism>
<comment type="function">
    <text evidence="1 7">Transcription factor required during the formation of the hypothalamo-pituitary axis. May function as a switch in neuronal development. Keeps neural cells undifferentiated by counteracting the activity of proneural proteins and suppresses neuronal differentiation. Required also within the pharyngeal epithelia for craniofacial morphogenesis. Controls a genetic switch in male development. Is necessary for initiating male sex determination by directing the development of supporting cell precursors (pre-Sertoli cells) as Sertoli rather than granulosa cells (By similarity).</text>
</comment>
<comment type="subunit">
    <text evidence="1">Interacts with SOX2 and FGFR1.</text>
</comment>
<comment type="interaction">
    <interactant intactId="EBI-9078386">
        <id>P41225</id>
    </interactant>
    <interactant intactId="EBI-930964">
        <id>P54253</id>
        <label>ATXN1</label>
    </interactant>
    <organismsDiffer>false</organismsDiffer>
    <experiments>3</experiments>
</comment>
<comment type="interaction">
    <interactant intactId="EBI-9078386">
        <id>P41225</id>
    </interactant>
    <interactant intactId="EBI-748171">
        <id>O43186</id>
        <label>CRX</label>
    </interactant>
    <organismsDiffer>false</organismsDiffer>
    <experiments>3</experiments>
</comment>
<comment type="interaction">
    <interactant intactId="EBI-9078386">
        <id>P41225</id>
    </interactant>
    <interactant intactId="EBI-355744">
        <id>Q12933</id>
        <label>TRAF2</label>
    </interactant>
    <organismsDiffer>false</organismsDiffer>
    <experiments>3</experiments>
</comment>
<comment type="subcellular location">
    <subcellularLocation>
        <location>Nucleus</location>
    </subcellularLocation>
</comment>
<comment type="domain">
    <text evidence="8">The 9aaTAD motif is a transactivation domain present in a large number of yeast and animal transcription factors.</text>
</comment>
<comment type="disease" evidence="5">
    <disease id="DI-02125">
        <name>Panhypopituitarism X-linked</name>
        <acronym>PHPX</acronym>
        <description>Affected individuals have absent infundibulum, anterior pituitary hypoplasia, and ectopic posterior pituitary.</description>
        <dbReference type="MIM" id="312000"/>
    </disease>
    <text>The disease is caused by variants affecting the gene represented in this entry.</text>
</comment>
<comment type="disease" evidence="4">
    <disease id="DI-01968">
        <name>Intellectual developmental disorder, X-linked, with isolated growth hormone deficiency</name>
        <acronym>MRXGH</acronym>
        <description>A disorder characterized by the association of variable degrees of intellectual disability with panhypopituitarism, variable combinations of hypothyroidism, delayed pubertal development, and short stature due to growth hormone deficiency.</description>
        <dbReference type="MIM" id="300123"/>
    </disease>
    <text>The disease is caused by variants affecting the gene represented in this entry.</text>
</comment>
<comment type="disease" evidence="7">
    <disease id="DI-03008">
        <name>46,XX sex reversal 3</name>
        <acronym>SRXX3</acronym>
        <description>A condition in which male gonads develop in a genetic female (female to male sex reversal).</description>
        <dbReference type="MIM" id="300833"/>
    </disease>
    <text>The disease is caused by variants affecting the gene represented in this entry. Copy number variations (CNV) encompassing or in close proximity to SOX3 are responsible for XX male reversal. These variations include two duplications of approximately 123 kb and 85 kb, the former of which spans the entire SOX3 gene; a 343 kb deletion immediately upstream of SOX3 that is probably responsible of altered regulation (and not increased dosage) of SOX3; a large (approximately 6 Mb) duplication that encompasses SOX3 and at least 18 additional distally located genes. Its proximal breakpoint falls within the SOX3 regulatory region. This large rearrangement has been found in a patient with XX male reversal and a complex phenotype that also includes a scrotal hypoplasia, microcephaly, developmental delay, and growth retardation.</text>
</comment>
<comment type="disease" evidence="6">
    <disease id="DI-05492">
        <name>Hypoparathyroidism, X-linked</name>
        <acronym>HYPX</acronym>
        <description>An X-linked form of true hypoparathyroidism characterized by neonatal or infantile onset and absence of parathyroid glands. Clinical features are hypocalcemia, hyperphosphatemia, seizures, tetany and cramps.</description>
        <dbReference type="MIM" id="307700"/>
    </disease>
    <text evidence="6">The gene represented in this entry may be involved in disease pathogenesis. A disease causing, complex chromosomal rearrangement [del(X)(q27.1)inv ins(X;2)(q27.1;p25.3)] has been found in a family with X-linked hypoparathyroidism. This chromosomal abnormality is located 67 kb downstream of SOX3 and likely results in altered SOX3 expression with pathological consequences.</text>
</comment>
<comment type="caution">
    <text evidence="10">Was originally termed SOX-9.</text>
</comment>
<name>SOX3_HUMAN</name>
<reference key="1">
    <citation type="journal article" date="1993" name="Hum. Mol. Genet.">
        <title>SOX3 is an X-linked gene related to SRY.</title>
        <authorList>
            <person name="Stevanovic M."/>
            <person name="Lovell-Badge R."/>
            <person name="Collignon J."/>
            <person name="Goodfellow P.N."/>
        </authorList>
    </citation>
    <scope>NUCLEOTIDE SEQUENCE [GENOMIC DNA]</scope>
</reference>
<reference key="2">
    <citation type="submission" date="2000-05" db="EMBL/GenBank/DDBJ databases">
        <title>Clarification of the genomic sequence for human SOX3.</title>
        <authorList>
            <person name="Gorry M.C."/>
            <person name="Hart P.S."/>
            <person name="Sashi V."/>
            <person name="Hart T.C."/>
        </authorList>
    </citation>
    <scope>NUCLEOTIDE SEQUENCE [GENOMIC DNA]</scope>
</reference>
<reference key="3">
    <citation type="journal article" date="2005" name="Nature">
        <title>The DNA sequence of the human X chromosome.</title>
        <authorList>
            <person name="Ross M.T."/>
            <person name="Grafham D.V."/>
            <person name="Coffey A.J."/>
            <person name="Scherer S."/>
            <person name="McLay K."/>
            <person name="Muzny D."/>
            <person name="Platzer M."/>
            <person name="Howell G.R."/>
            <person name="Burrows C."/>
            <person name="Bird C.P."/>
            <person name="Frankish A."/>
            <person name="Lovell F.L."/>
            <person name="Howe K.L."/>
            <person name="Ashurst J.L."/>
            <person name="Fulton R.S."/>
            <person name="Sudbrak R."/>
            <person name="Wen G."/>
            <person name="Jones M.C."/>
            <person name="Hurles M.E."/>
            <person name="Andrews T.D."/>
            <person name="Scott C.E."/>
            <person name="Searle S."/>
            <person name="Ramser J."/>
            <person name="Whittaker A."/>
            <person name="Deadman R."/>
            <person name="Carter N.P."/>
            <person name="Hunt S.E."/>
            <person name="Chen R."/>
            <person name="Cree A."/>
            <person name="Gunaratne P."/>
            <person name="Havlak P."/>
            <person name="Hodgson A."/>
            <person name="Metzker M.L."/>
            <person name="Richards S."/>
            <person name="Scott G."/>
            <person name="Steffen D."/>
            <person name="Sodergren E."/>
            <person name="Wheeler D.A."/>
            <person name="Worley K.C."/>
            <person name="Ainscough R."/>
            <person name="Ambrose K.D."/>
            <person name="Ansari-Lari M.A."/>
            <person name="Aradhya S."/>
            <person name="Ashwell R.I."/>
            <person name="Babbage A.K."/>
            <person name="Bagguley C.L."/>
            <person name="Ballabio A."/>
            <person name="Banerjee R."/>
            <person name="Barker G.E."/>
            <person name="Barlow K.F."/>
            <person name="Barrett I.P."/>
            <person name="Bates K.N."/>
            <person name="Beare D.M."/>
            <person name="Beasley H."/>
            <person name="Beasley O."/>
            <person name="Beck A."/>
            <person name="Bethel G."/>
            <person name="Blechschmidt K."/>
            <person name="Brady N."/>
            <person name="Bray-Allen S."/>
            <person name="Bridgeman A.M."/>
            <person name="Brown A.J."/>
            <person name="Brown M.J."/>
            <person name="Bonnin D."/>
            <person name="Bruford E.A."/>
            <person name="Buhay C."/>
            <person name="Burch P."/>
            <person name="Burford D."/>
            <person name="Burgess J."/>
            <person name="Burrill W."/>
            <person name="Burton J."/>
            <person name="Bye J.M."/>
            <person name="Carder C."/>
            <person name="Carrel L."/>
            <person name="Chako J."/>
            <person name="Chapman J.C."/>
            <person name="Chavez D."/>
            <person name="Chen E."/>
            <person name="Chen G."/>
            <person name="Chen Y."/>
            <person name="Chen Z."/>
            <person name="Chinault C."/>
            <person name="Ciccodicola A."/>
            <person name="Clark S.Y."/>
            <person name="Clarke G."/>
            <person name="Clee C.M."/>
            <person name="Clegg S."/>
            <person name="Clerc-Blankenburg K."/>
            <person name="Clifford K."/>
            <person name="Cobley V."/>
            <person name="Cole C.G."/>
            <person name="Conquer J.S."/>
            <person name="Corby N."/>
            <person name="Connor R.E."/>
            <person name="David R."/>
            <person name="Davies J."/>
            <person name="Davis C."/>
            <person name="Davis J."/>
            <person name="Delgado O."/>
            <person name="Deshazo D."/>
            <person name="Dhami P."/>
            <person name="Ding Y."/>
            <person name="Dinh H."/>
            <person name="Dodsworth S."/>
            <person name="Draper H."/>
            <person name="Dugan-Rocha S."/>
            <person name="Dunham A."/>
            <person name="Dunn M."/>
            <person name="Durbin K.J."/>
            <person name="Dutta I."/>
            <person name="Eades T."/>
            <person name="Ellwood M."/>
            <person name="Emery-Cohen A."/>
            <person name="Errington H."/>
            <person name="Evans K.L."/>
            <person name="Faulkner L."/>
            <person name="Francis F."/>
            <person name="Frankland J."/>
            <person name="Fraser A.E."/>
            <person name="Galgoczy P."/>
            <person name="Gilbert J."/>
            <person name="Gill R."/>
            <person name="Gloeckner G."/>
            <person name="Gregory S.G."/>
            <person name="Gribble S."/>
            <person name="Griffiths C."/>
            <person name="Grocock R."/>
            <person name="Gu Y."/>
            <person name="Gwilliam R."/>
            <person name="Hamilton C."/>
            <person name="Hart E.A."/>
            <person name="Hawes A."/>
            <person name="Heath P.D."/>
            <person name="Heitmann K."/>
            <person name="Hennig S."/>
            <person name="Hernandez J."/>
            <person name="Hinzmann B."/>
            <person name="Ho S."/>
            <person name="Hoffs M."/>
            <person name="Howden P.J."/>
            <person name="Huckle E.J."/>
            <person name="Hume J."/>
            <person name="Hunt P.J."/>
            <person name="Hunt A.R."/>
            <person name="Isherwood J."/>
            <person name="Jacob L."/>
            <person name="Johnson D."/>
            <person name="Jones S."/>
            <person name="de Jong P.J."/>
            <person name="Joseph S.S."/>
            <person name="Keenan S."/>
            <person name="Kelly S."/>
            <person name="Kershaw J.K."/>
            <person name="Khan Z."/>
            <person name="Kioschis P."/>
            <person name="Klages S."/>
            <person name="Knights A.J."/>
            <person name="Kosiura A."/>
            <person name="Kovar-Smith C."/>
            <person name="Laird G.K."/>
            <person name="Langford C."/>
            <person name="Lawlor S."/>
            <person name="Leversha M."/>
            <person name="Lewis L."/>
            <person name="Liu W."/>
            <person name="Lloyd C."/>
            <person name="Lloyd D.M."/>
            <person name="Loulseged H."/>
            <person name="Loveland J.E."/>
            <person name="Lovell J.D."/>
            <person name="Lozado R."/>
            <person name="Lu J."/>
            <person name="Lyne R."/>
            <person name="Ma J."/>
            <person name="Maheshwari M."/>
            <person name="Matthews L.H."/>
            <person name="McDowall J."/>
            <person name="McLaren S."/>
            <person name="McMurray A."/>
            <person name="Meidl P."/>
            <person name="Meitinger T."/>
            <person name="Milne S."/>
            <person name="Miner G."/>
            <person name="Mistry S.L."/>
            <person name="Morgan M."/>
            <person name="Morris S."/>
            <person name="Mueller I."/>
            <person name="Mullikin J.C."/>
            <person name="Nguyen N."/>
            <person name="Nordsiek G."/>
            <person name="Nyakatura G."/>
            <person name="O'dell C.N."/>
            <person name="Okwuonu G."/>
            <person name="Palmer S."/>
            <person name="Pandian R."/>
            <person name="Parker D."/>
            <person name="Parrish J."/>
            <person name="Pasternak S."/>
            <person name="Patel D."/>
            <person name="Pearce A.V."/>
            <person name="Pearson D.M."/>
            <person name="Pelan S.E."/>
            <person name="Perez L."/>
            <person name="Porter K.M."/>
            <person name="Ramsey Y."/>
            <person name="Reichwald K."/>
            <person name="Rhodes S."/>
            <person name="Ridler K.A."/>
            <person name="Schlessinger D."/>
            <person name="Schueler M.G."/>
            <person name="Sehra H.K."/>
            <person name="Shaw-Smith C."/>
            <person name="Shen H."/>
            <person name="Sheridan E.M."/>
            <person name="Shownkeen R."/>
            <person name="Skuce C.D."/>
            <person name="Smith M.L."/>
            <person name="Sotheran E.C."/>
            <person name="Steingruber H.E."/>
            <person name="Steward C.A."/>
            <person name="Storey R."/>
            <person name="Swann R.M."/>
            <person name="Swarbreck D."/>
            <person name="Tabor P.E."/>
            <person name="Taudien S."/>
            <person name="Taylor T."/>
            <person name="Teague B."/>
            <person name="Thomas K."/>
            <person name="Thorpe A."/>
            <person name="Timms K."/>
            <person name="Tracey A."/>
            <person name="Trevanion S."/>
            <person name="Tromans A.C."/>
            <person name="d'Urso M."/>
            <person name="Verduzco D."/>
            <person name="Villasana D."/>
            <person name="Waldron L."/>
            <person name="Wall M."/>
            <person name="Wang Q."/>
            <person name="Warren J."/>
            <person name="Warry G.L."/>
            <person name="Wei X."/>
            <person name="West A."/>
            <person name="Whitehead S.L."/>
            <person name="Whiteley M.N."/>
            <person name="Wilkinson J.E."/>
            <person name="Willey D.L."/>
            <person name="Williams G."/>
            <person name="Williams L."/>
            <person name="Williamson A."/>
            <person name="Williamson H."/>
            <person name="Wilming L."/>
            <person name="Woodmansey R.L."/>
            <person name="Wray P.W."/>
            <person name="Yen J."/>
            <person name="Zhang J."/>
            <person name="Zhou J."/>
            <person name="Zoghbi H."/>
            <person name="Zorilla S."/>
            <person name="Buck D."/>
            <person name="Reinhardt R."/>
            <person name="Poustka A."/>
            <person name="Rosenthal A."/>
            <person name="Lehrach H."/>
            <person name="Meindl A."/>
            <person name="Minx P.J."/>
            <person name="Hillier L.W."/>
            <person name="Willard H.F."/>
            <person name="Wilson R.K."/>
            <person name="Waterston R.H."/>
            <person name="Rice C.M."/>
            <person name="Vaudin M."/>
            <person name="Coulson A."/>
            <person name="Nelson D.L."/>
            <person name="Weinstock G."/>
            <person name="Sulston J.E."/>
            <person name="Durbin R.M."/>
            <person name="Hubbard T."/>
            <person name="Gibbs R.A."/>
            <person name="Beck S."/>
            <person name="Rogers J."/>
            <person name="Bentley D.R."/>
        </authorList>
    </citation>
    <scope>NUCLEOTIDE SEQUENCE [LARGE SCALE GENOMIC DNA]</scope>
</reference>
<reference key="4">
    <citation type="journal article" date="2004" name="Genome Res.">
        <title>The status, quality, and expansion of the NIH full-length cDNA project: the Mammalian Gene Collection (MGC).</title>
        <authorList>
            <consortium name="The MGC Project Team"/>
        </authorList>
    </citation>
    <scope>NUCLEOTIDE SEQUENCE [LARGE SCALE MRNA]</scope>
    <source>
        <tissue>Brain</tissue>
    </source>
</reference>
<reference key="5">
    <citation type="journal article" date="1992" name="Nucleic Acids Res.">
        <title>A conserved family of genes related to the testis determining gene, SRY.</title>
        <authorList>
            <person name="Denny P."/>
            <person name="Swift S."/>
            <person name="Brand N."/>
            <person name="Dabhade N."/>
            <person name="Barton P."/>
            <person name="Ashworth A."/>
        </authorList>
    </citation>
    <scope>NUCLEOTIDE SEQUENCE [MRNA] OF 150-203</scope>
</reference>
<reference key="6">
    <citation type="journal article" date="2011" name="J. Clin. Invest.">
        <title>Identification of SOX3 as an XX male sex reversal gene in mice and humans.</title>
        <authorList>
            <person name="Sutton E."/>
            <person name="Hughes J."/>
            <person name="White S."/>
            <person name="Sekido R."/>
            <person name="Tan J."/>
            <person name="Arboleda V."/>
            <person name="Rogers N."/>
            <person name="Knower K."/>
            <person name="Rowley L."/>
            <person name="Eyre H."/>
            <person name="Rizzoti K."/>
            <person name="McAninch D."/>
            <person name="Goncalves J."/>
            <person name="Slee J."/>
            <person name="Turbitt E."/>
            <person name="Bruno D."/>
            <person name="Bengtsson H."/>
            <person name="Harley V."/>
            <person name="Vilain E."/>
            <person name="Sinclair A."/>
            <person name="Lovell-Badge R."/>
            <person name="Thomas P."/>
        </authorList>
    </citation>
    <scope>FUNCTION</scope>
    <scope>INVOLVEMENT IN SRXX3</scope>
</reference>
<reference key="7">
    <citation type="journal article" date="2011" name="Sci. Signal.">
        <title>System-wide temporal characterization of the proteome and phosphoproteome of human embryonic stem cell differentiation.</title>
        <authorList>
            <person name="Rigbolt K.T."/>
            <person name="Prokhorova T.A."/>
            <person name="Akimov V."/>
            <person name="Henningsen J."/>
            <person name="Johansen P.T."/>
            <person name="Kratchmarova I."/>
            <person name="Kassem M."/>
            <person name="Mann M."/>
            <person name="Olsen J.V."/>
            <person name="Blagoev B."/>
        </authorList>
    </citation>
    <scope>IDENTIFICATION BY MASS SPECTROMETRY [LARGE SCALE ANALYSIS]</scope>
</reference>
<reference key="8">
    <citation type="journal article" date="2021" name="Stem. Cell. Rev. Rep.">
        <title>The 9aaTAD Activation Domains in the Yamanaka Transcription Factors Oct4, Sox2, Myc, and Klf4.</title>
        <authorList>
            <person name="Piskacek M."/>
            <person name="Otasevic T."/>
            <person name="Repko M."/>
            <person name="Knight A."/>
        </authorList>
    </citation>
    <scope>9AATAD MOTIF</scope>
</reference>
<reference key="9">
    <citation type="journal article" date="2002" name="Am. J. Hum. Genet.">
        <title>Transcription factor SOX3 is involved in X-linked mental retardation with growth hormone deficiency.</title>
        <authorList>
            <person name="Laumonnier F."/>
            <person name="Ronce N."/>
            <person name="Hamel B.C.J."/>
            <person name="Thomas P."/>
            <person name="Lespinasse J."/>
            <person name="Raynaud M."/>
            <person name="Paringaux C."/>
            <person name="Van Bokhoven H."/>
            <person name="Kalscheuer V."/>
            <person name="Fryns J.-P."/>
            <person name="Chelly J."/>
            <person name="Moraine C."/>
            <person name="Briault S."/>
        </authorList>
    </citation>
    <scope>VARIANT MRXGH ALA-ALA-ALA-ALA-ALA-ALA-ALA-ALA-ALA-ALA-ALA-248 INS</scope>
</reference>
<reference key="10">
    <citation type="journal article" date="2005" name="Am. J. Hum. Genet.">
        <title>Over- and underdosage of SOX3 is associated with infundibular hypoplasia and hypopituitarism.</title>
        <authorList>
            <person name="Woods K.S."/>
            <person name="Cundall M."/>
            <person name="Turton J."/>
            <person name="Rizotti K."/>
            <person name="Mehta A."/>
            <person name="Palmer R."/>
            <person name="Wong J."/>
            <person name="Chong W.K."/>
            <person name="Al-Zyoud M."/>
            <person name="El-Ali M."/>
            <person name="Otonkoski T."/>
            <person name="Martinez-Barbera J.-P."/>
            <person name="Thomas P.Q."/>
            <person name="Robinson I.C."/>
            <person name="Lovell-Badge R."/>
            <person name="Woodward K.J."/>
            <person name="Dattani M.T."/>
        </authorList>
    </citation>
    <scope>VARIANT PHPX ALA-ALA-ALA-ALA-ALA-ALA-ALA-248 INS</scope>
    <scope>VARIANT THR-43</scope>
</reference>
<reference key="11">
    <citation type="journal article" date="2005" name="J. Clin. Invest.">
        <title>An interstitial deletion-insertion involving chromosomes 2p25.3 and Xq27.1, near SOX3, causes X-linked recessive hypoparathyroidism.</title>
        <authorList>
            <person name="Bowl M.R."/>
            <person name="Nesbit M.A."/>
            <person name="Harding B."/>
            <person name="Levy E."/>
            <person name="Jefferson A."/>
            <person name="Volpi E."/>
            <person name="Rizzoti K."/>
            <person name="Lovell-Badge R."/>
            <person name="Schlessinger D."/>
            <person name="Whyte M.P."/>
            <person name="Thakker R.V."/>
        </authorList>
    </citation>
    <scope>INVOLVEMENT IN HYPX</scope>
    <scope>CHROMOSOMAL REARRANGEMENT</scope>
</reference>
<dbReference type="EMBL" id="X71135">
    <property type="protein sequence ID" value="CAA50465.1"/>
    <property type="molecule type" value="Genomic_DNA"/>
</dbReference>
<dbReference type="EMBL" id="AF264713">
    <property type="protein sequence ID" value="AAF73059.1"/>
    <property type="molecule type" value="Genomic_DNA"/>
</dbReference>
<dbReference type="EMBL" id="AL121875">
    <property type="status" value="NOT_ANNOTATED_CDS"/>
    <property type="molecule type" value="Genomic_DNA"/>
</dbReference>
<dbReference type="EMBL" id="BC093863">
    <property type="protein sequence ID" value="AAH93863.1"/>
    <property type="molecule type" value="mRNA"/>
</dbReference>
<dbReference type="EMBL" id="BC093865">
    <property type="protein sequence ID" value="AAH93865.1"/>
    <property type="molecule type" value="mRNA"/>
</dbReference>
<dbReference type="EMBL" id="X65665">
    <property type="protein sequence ID" value="CAA46616.1"/>
    <property type="molecule type" value="mRNA"/>
</dbReference>
<dbReference type="CCDS" id="CCDS14669.1"/>
<dbReference type="PIR" id="I38239">
    <property type="entry name" value="I38239"/>
</dbReference>
<dbReference type="PIR" id="S22942">
    <property type="entry name" value="S22942"/>
</dbReference>
<dbReference type="RefSeq" id="NP_005625.2">
    <property type="nucleotide sequence ID" value="NM_005634.2"/>
</dbReference>
<dbReference type="SMR" id="P41225"/>
<dbReference type="BioGRID" id="112541">
    <property type="interactions" value="18"/>
</dbReference>
<dbReference type="FunCoup" id="P41225">
    <property type="interactions" value="173"/>
</dbReference>
<dbReference type="IntAct" id="P41225">
    <property type="interactions" value="5"/>
</dbReference>
<dbReference type="STRING" id="9606.ENSP00000359567"/>
<dbReference type="GlyGen" id="P41225">
    <property type="glycosylation" value="1 site, 1 O-linked glycan (1 site)"/>
</dbReference>
<dbReference type="iPTMnet" id="P41225"/>
<dbReference type="PhosphoSitePlus" id="P41225"/>
<dbReference type="BioMuta" id="SOX3"/>
<dbReference type="DMDM" id="48429228"/>
<dbReference type="jPOST" id="P41225"/>
<dbReference type="MassIVE" id="P41225"/>
<dbReference type="PaxDb" id="9606-ENSP00000359567"/>
<dbReference type="PeptideAtlas" id="P41225"/>
<dbReference type="ProteomicsDB" id="55433"/>
<dbReference type="Antibodypedia" id="16808">
    <property type="antibodies" value="283 antibodies from 33 providers"/>
</dbReference>
<dbReference type="DNASU" id="6658"/>
<dbReference type="Ensembl" id="ENST00000370536.5">
    <property type="protein sequence ID" value="ENSP00000359567.2"/>
    <property type="gene ID" value="ENSG00000134595.9"/>
</dbReference>
<dbReference type="GeneID" id="6658"/>
<dbReference type="KEGG" id="hsa:6658"/>
<dbReference type="MANE-Select" id="ENST00000370536.5">
    <property type="protein sequence ID" value="ENSP00000359567.2"/>
    <property type="RefSeq nucleotide sequence ID" value="NM_005634.3"/>
    <property type="RefSeq protein sequence ID" value="NP_005625.2"/>
</dbReference>
<dbReference type="UCSC" id="uc004fbd.2">
    <property type="organism name" value="human"/>
</dbReference>
<dbReference type="AGR" id="HGNC:11199"/>
<dbReference type="CTD" id="6658"/>
<dbReference type="DisGeNET" id="6658"/>
<dbReference type="GeneCards" id="SOX3"/>
<dbReference type="GeneReviews" id="SOX3"/>
<dbReference type="HGNC" id="HGNC:11199">
    <property type="gene designation" value="SOX3"/>
</dbReference>
<dbReference type="HPA" id="ENSG00000134595">
    <property type="expression patterns" value="Tissue enhanced (brain, fallopian tube, testis)"/>
</dbReference>
<dbReference type="MalaCards" id="SOX3"/>
<dbReference type="MIM" id="300123">
    <property type="type" value="phenotype"/>
</dbReference>
<dbReference type="MIM" id="300833">
    <property type="type" value="phenotype"/>
</dbReference>
<dbReference type="MIM" id="307700">
    <property type="type" value="phenotype"/>
</dbReference>
<dbReference type="MIM" id="312000">
    <property type="type" value="phenotype"/>
</dbReference>
<dbReference type="MIM" id="313430">
    <property type="type" value="gene"/>
</dbReference>
<dbReference type="neXtProt" id="NX_P41225"/>
<dbReference type="OpenTargets" id="ENSG00000134595"/>
<dbReference type="Orphanet" id="393">
    <property type="disease" value="46,XX testicular difference of sex development"/>
</dbReference>
<dbReference type="Orphanet" id="90695">
    <property type="disease" value="Non-acquired panhypopituitarism"/>
</dbReference>
<dbReference type="Orphanet" id="3157">
    <property type="disease" value="Septo-optic dysplasia spectrum"/>
</dbReference>
<dbReference type="Orphanet" id="79495">
    <property type="disease" value="X-linked congenital generalized hypertrichosis"/>
</dbReference>
<dbReference type="Orphanet" id="67045">
    <property type="disease" value="X-linked intellectual disability with isolated growth hormone deficiency"/>
</dbReference>
<dbReference type="PharmGKB" id="PA36036"/>
<dbReference type="VEuPathDB" id="HostDB:ENSG00000134595"/>
<dbReference type="eggNOG" id="KOG0527">
    <property type="taxonomic scope" value="Eukaryota"/>
</dbReference>
<dbReference type="GeneTree" id="ENSGT00940000162359"/>
<dbReference type="HOGENOM" id="CLU_021123_0_0_1"/>
<dbReference type="InParanoid" id="P41225"/>
<dbReference type="OMA" id="GWSNGAY"/>
<dbReference type="OrthoDB" id="6247875at2759"/>
<dbReference type="PAN-GO" id="P41225">
    <property type="GO annotations" value="6 GO annotations based on evolutionary models"/>
</dbReference>
<dbReference type="PhylomeDB" id="P41225"/>
<dbReference type="TreeFam" id="TF351735"/>
<dbReference type="PathwayCommons" id="P41225"/>
<dbReference type="Reactome" id="R-HSA-3769402">
    <property type="pathway name" value="Deactivation of the beta-catenin transactivating complex"/>
</dbReference>
<dbReference type="SignaLink" id="P41225"/>
<dbReference type="SIGNOR" id="P41225"/>
<dbReference type="BioGRID-ORCS" id="6658">
    <property type="hits" value="15 hits in 789 CRISPR screens"/>
</dbReference>
<dbReference type="CD-CODE" id="DEE660B4">
    <property type="entry name" value="Stress granule"/>
</dbReference>
<dbReference type="GeneWiki" id="SOX3"/>
<dbReference type="GenomeRNAi" id="6658"/>
<dbReference type="Pharos" id="P41225">
    <property type="development level" value="Tbio"/>
</dbReference>
<dbReference type="PRO" id="PR:P41225"/>
<dbReference type="Proteomes" id="UP000005640">
    <property type="component" value="Chromosome X"/>
</dbReference>
<dbReference type="RNAct" id="P41225">
    <property type="molecule type" value="protein"/>
</dbReference>
<dbReference type="Bgee" id="ENSG00000134595">
    <property type="expression patterns" value="Expressed in ventricular zone and 44 other cell types or tissues"/>
</dbReference>
<dbReference type="GO" id="GO:0000785">
    <property type="term" value="C:chromatin"/>
    <property type="evidence" value="ECO:0000247"/>
    <property type="project" value="NTNU_SB"/>
</dbReference>
<dbReference type="GO" id="GO:0005654">
    <property type="term" value="C:nucleoplasm"/>
    <property type="evidence" value="ECO:0000314"/>
    <property type="project" value="HPA"/>
</dbReference>
<dbReference type="GO" id="GO:0005634">
    <property type="term" value="C:nucleus"/>
    <property type="evidence" value="ECO:0000318"/>
    <property type="project" value="GO_Central"/>
</dbReference>
<dbReference type="GO" id="GO:0003677">
    <property type="term" value="F:DNA binding"/>
    <property type="evidence" value="ECO:0000304"/>
    <property type="project" value="ProtInc"/>
</dbReference>
<dbReference type="GO" id="GO:0001228">
    <property type="term" value="F:DNA-binding transcription activator activity, RNA polymerase II-specific"/>
    <property type="evidence" value="ECO:0000318"/>
    <property type="project" value="GO_Central"/>
</dbReference>
<dbReference type="GO" id="GO:0000981">
    <property type="term" value="F:DNA-binding transcription factor activity, RNA polymerase II-specific"/>
    <property type="evidence" value="ECO:0000247"/>
    <property type="project" value="NTNU_SB"/>
</dbReference>
<dbReference type="GO" id="GO:0000978">
    <property type="term" value="F:RNA polymerase II cis-regulatory region sequence-specific DNA binding"/>
    <property type="evidence" value="ECO:0000250"/>
    <property type="project" value="UniProtKB"/>
</dbReference>
<dbReference type="GO" id="GO:1990837">
    <property type="term" value="F:sequence-specific double-stranded DNA binding"/>
    <property type="evidence" value="ECO:0000314"/>
    <property type="project" value="ARUK-UCL"/>
</dbReference>
<dbReference type="GO" id="GO:0007420">
    <property type="term" value="P:brain development"/>
    <property type="evidence" value="ECO:0000318"/>
    <property type="project" value="GO_Central"/>
</dbReference>
<dbReference type="GO" id="GO:0007417">
    <property type="term" value="P:central nervous system development"/>
    <property type="evidence" value="ECO:0000304"/>
    <property type="project" value="ProtInc"/>
</dbReference>
<dbReference type="GO" id="GO:0060324">
    <property type="term" value="P:face development"/>
    <property type="evidence" value="ECO:0000250"/>
    <property type="project" value="UniProtKB"/>
</dbReference>
<dbReference type="GO" id="GO:0021854">
    <property type="term" value="P:hypothalamus development"/>
    <property type="evidence" value="ECO:0000250"/>
    <property type="project" value="UniProtKB"/>
</dbReference>
<dbReference type="GO" id="GO:0045665">
    <property type="term" value="P:negative regulation of neuron differentiation"/>
    <property type="evidence" value="ECO:0000250"/>
    <property type="project" value="UniProtKB"/>
</dbReference>
<dbReference type="GO" id="GO:0000122">
    <property type="term" value="P:negative regulation of transcription by RNA polymerase II"/>
    <property type="evidence" value="ECO:0000318"/>
    <property type="project" value="GO_Central"/>
</dbReference>
<dbReference type="GO" id="GO:0030182">
    <property type="term" value="P:neuron differentiation"/>
    <property type="evidence" value="ECO:0000318"/>
    <property type="project" value="GO_Central"/>
</dbReference>
<dbReference type="GO" id="GO:0021983">
    <property type="term" value="P:pituitary gland development"/>
    <property type="evidence" value="ECO:0000250"/>
    <property type="project" value="UniProtKB"/>
</dbReference>
<dbReference type="GO" id="GO:0045944">
    <property type="term" value="P:positive regulation of transcription by RNA polymerase II"/>
    <property type="evidence" value="ECO:0000318"/>
    <property type="project" value="GO_Central"/>
</dbReference>
<dbReference type="GO" id="GO:0007423">
    <property type="term" value="P:sensory organ development"/>
    <property type="evidence" value="ECO:0000250"/>
    <property type="project" value="UniProtKB"/>
</dbReference>
<dbReference type="GO" id="GO:0007530">
    <property type="term" value="P:sex determination"/>
    <property type="evidence" value="ECO:0000315"/>
    <property type="project" value="UniProtKB"/>
</dbReference>
<dbReference type="CDD" id="cd01388">
    <property type="entry name" value="HMG-box_SoxB"/>
    <property type="match status" value="1"/>
</dbReference>
<dbReference type="FunFam" id="1.10.30.10:FF:000002">
    <property type="entry name" value="transcription factor Sox-2"/>
    <property type="match status" value="1"/>
</dbReference>
<dbReference type="Gene3D" id="1.10.30.10">
    <property type="entry name" value="High mobility group box domain"/>
    <property type="match status" value="1"/>
</dbReference>
<dbReference type="InterPro" id="IPR009071">
    <property type="entry name" value="HMG_box_dom"/>
</dbReference>
<dbReference type="InterPro" id="IPR036910">
    <property type="entry name" value="HMG_box_dom_sf"/>
</dbReference>
<dbReference type="InterPro" id="IPR022097">
    <property type="entry name" value="SOX_fam"/>
</dbReference>
<dbReference type="InterPro" id="IPR050140">
    <property type="entry name" value="SRY-related_HMG-box_TF-like"/>
</dbReference>
<dbReference type="PANTHER" id="PTHR10270">
    <property type="entry name" value="SOX TRANSCRIPTION FACTOR"/>
    <property type="match status" value="1"/>
</dbReference>
<dbReference type="PANTHER" id="PTHR10270:SF111">
    <property type="entry name" value="TRANSCRIPTION FACTOR SOX-3"/>
    <property type="match status" value="1"/>
</dbReference>
<dbReference type="Pfam" id="PF00505">
    <property type="entry name" value="HMG_box"/>
    <property type="match status" value="1"/>
</dbReference>
<dbReference type="Pfam" id="PF12336">
    <property type="entry name" value="SOXp"/>
    <property type="match status" value="1"/>
</dbReference>
<dbReference type="SMART" id="SM00398">
    <property type="entry name" value="HMG"/>
    <property type="match status" value="1"/>
</dbReference>
<dbReference type="SUPFAM" id="SSF47095">
    <property type="entry name" value="HMG-box"/>
    <property type="match status" value="1"/>
</dbReference>
<dbReference type="PROSITE" id="PS50118">
    <property type="entry name" value="HMG_BOX_2"/>
    <property type="match status" value="1"/>
</dbReference>
<gene>
    <name type="primary">SOX3</name>
</gene>
<evidence type="ECO:0000250" key="1"/>
<evidence type="ECO:0000255" key="2">
    <source>
        <dbReference type="PROSITE-ProRule" id="PRU00267"/>
    </source>
</evidence>
<evidence type="ECO:0000256" key="3">
    <source>
        <dbReference type="SAM" id="MobiDB-lite"/>
    </source>
</evidence>
<evidence type="ECO:0000269" key="4">
    <source>
    </source>
</evidence>
<evidence type="ECO:0000269" key="5">
    <source>
    </source>
</evidence>
<evidence type="ECO:0000269" key="6">
    <source>
    </source>
</evidence>
<evidence type="ECO:0000269" key="7">
    <source>
    </source>
</evidence>
<evidence type="ECO:0000269" key="8">
    <source>
    </source>
</evidence>
<evidence type="ECO:0000305" key="9"/>
<evidence type="ECO:0000305" key="10">
    <source>
    </source>
</evidence>
<keyword id="KW-0217">Developmental protein</keyword>
<keyword id="KW-0225">Disease variant</keyword>
<keyword id="KW-0238">DNA-binding</keyword>
<keyword id="KW-0991">Intellectual disability</keyword>
<keyword id="KW-0539">Nucleus</keyword>
<keyword id="KW-1267">Proteomics identification</keyword>
<keyword id="KW-1185">Reference proteome</keyword>
<keyword id="KW-0804">Transcription</keyword>
<keyword id="KW-0805">Transcription regulation</keyword>
<feature type="chain" id="PRO_0000048720" description="Transcription factor SOX-3">
    <location>
        <begin position="1"/>
        <end position="446"/>
    </location>
</feature>
<feature type="DNA-binding region" description="HMG box" evidence="2">
    <location>
        <begin position="139"/>
        <end position="207"/>
    </location>
</feature>
<feature type="region of interest" description="Disordered" evidence="3">
    <location>
        <begin position="29"/>
        <end position="48"/>
    </location>
</feature>
<feature type="region of interest" description="Disordered" evidence="3">
    <location>
        <begin position="87"/>
        <end position="140"/>
    </location>
</feature>
<feature type="short sequence motif" description="9aaTAD" evidence="8">
    <location>
        <begin position="399"/>
        <end position="407"/>
    </location>
</feature>
<feature type="compositionally biased region" description="Gly residues" evidence="3">
    <location>
        <begin position="96"/>
        <end position="107"/>
    </location>
</feature>
<feature type="compositionally biased region" description="Gly residues" evidence="3">
    <location>
        <begin position="117"/>
        <end position="134"/>
    </location>
</feature>
<feature type="sequence variant" id="VAR_026451" description="In dbSNP:rs73637709." evidence="5">
    <original>A</original>
    <variation>T</variation>
    <location>
        <position position="43"/>
    </location>
</feature>
<feature type="sequence variant" id="VAR_026452" description="In PHPX; reduced transcriptional activity and impaired nuclear localization." evidence="5">
    <original>A</original>
    <variation>AAAAAAAA</variation>
    <location>
        <position position="248"/>
    </location>
</feature>
<feature type="sequence variant" id="VAR_033258" description="In MRXGH." evidence="4">
    <original>A</original>
    <variation>AAAAAAAAAAAA</variation>
    <location>
        <position position="248"/>
    </location>
</feature>
<feature type="sequence conflict" description="In Ref. 5; CAA46616." evidence="9" ref="5">
    <original>L</original>
    <variation>Q</variation>
    <location>
        <position position="159"/>
    </location>
</feature>
<feature type="sequence conflict" description="In Ref. 5; CAA46616." evidence="9" ref="5">
    <original>D</original>
    <variation>E</variation>
    <location>
        <position position="176"/>
    </location>
</feature>
<feature type="sequence conflict" description="In Ref. 5; CAA46616." evidence="9" ref="5">
    <original>E</original>
    <variation>D</variation>
    <location>
        <position position="202"/>
    </location>
</feature>
<feature type="sequence conflict" description="In Ref. 2; CAA50465." evidence="9" ref="2">
    <location>
        <begin position="297"/>
        <end position="299"/>
    </location>
</feature>